<sequence length="89" mass="9771">MNLTLILFLIGILGFVLNRKNIILMLISIEIMLLAITFLILVSSLNIDDILGQTYAIYIIVVAGAESAIGLGILVAFYRLRGSVAIEYK</sequence>
<name>NU4LM_CRYPA</name>
<dbReference type="EC" id="7.1.1.2"/>
<dbReference type="EMBL" id="AF456838">
    <property type="protein sequence ID" value="AAO14098.1"/>
    <property type="molecule type" value="Genomic_DNA"/>
</dbReference>
<dbReference type="SMR" id="Q8HHD3"/>
<dbReference type="GO" id="GO:0031966">
    <property type="term" value="C:mitochondrial membrane"/>
    <property type="evidence" value="ECO:0007669"/>
    <property type="project" value="UniProtKB-SubCell"/>
</dbReference>
<dbReference type="GO" id="GO:0030964">
    <property type="term" value="C:NADH dehydrogenase complex"/>
    <property type="evidence" value="ECO:0007669"/>
    <property type="project" value="TreeGrafter"/>
</dbReference>
<dbReference type="GO" id="GO:0008137">
    <property type="term" value="F:NADH dehydrogenase (ubiquinone) activity"/>
    <property type="evidence" value="ECO:0007669"/>
    <property type="project" value="UniProtKB-EC"/>
</dbReference>
<dbReference type="GO" id="GO:0042773">
    <property type="term" value="P:ATP synthesis coupled electron transport"/>
    <property type="evidence" value="ECO:0007669"/>
    <property type="project" value="InterPro"/>
</dbReference>
<dbReference type="FunFam" id="1.10.287.3510:FF:000004">
    <property type="entry name" value="NADH-ubiquinone oxidoreductase chain 4L"/>
    <property type="match status" value="1"/>
</dbReference>
<dbReference type="Gene3D" id="1.10.287.3510">
    <property type="match status" value="1"/>
</dbReference>
<dbReference type="InterPro" id="IPR001133">
    <property type="entry name" value="NADH_UbQ_OxRdtase_chain4L/K"/>
</dbReference>
<dbReference type="InterPro" id="IPR039428">
    <property type="entry name" value="NUOK/Mnh_C1-like"/>
</dbReference>
<dbReference type="NCBIfam" id="NF004320">
    <property type="entry name" value="PRK05715.1-2"/>
    <property type="match status" value="1"/>
</dbReference>
<dbReference type="PANTHER" id="PTHR11434:SF16">
    <property type="entry name" value="NADH-UBIQUINONE OXIDOREDUCTASE CHAIN 4L"/>
    <property type="match status" value="1"/>
</dbReference>
<dbReference type="PANTHER" id="PTHR11434">
    <property type="entry name" value="NADH-UBIQUINONE OXIDOREDUCTASE SUBUNIT ND4L"/>
    <property type="match status" value="1"/>
</dbReference>
<dbReference type="Pfam" id="PF00420">
    <property type="entry name" value="Oxidored_q2"/>
    <property type="match status" value="1"/>
</dbReference>
<reference key="1">
    <citation type="journal article" date="2003" name="Fungal Genet. Biol.">
        <title>Mapping and characterization of polymorphism in mtDNA of Cryphonectria parasitica: evidence of the presence of an optional intron.</title>
        <authorList>
            <person name="Gobbi E."/>
            <person name="Firrao G."/>
            <person name="Carpanelli A."/>
            <person name="Locci R."/>
            <person name="Van Alfen N.K."/>
        </authorList>
    </citation>
    <scope>NUCLEOTIDE SEQUENCE [GENOMIC DNA]</scope>
</reference>
<accession>Q8HHD3</accession>
<gene>
    <name type="primary">ND4L</name>
    <name type="synonym">NAD4L</name>
</gene>
<comment type="function">
    <text evidence="1">Core subunit of the mitochondrial membrane respiratory chain NADH dehydrogenase (Complex I) that is believed to belong to the minimal assembly required for catalysis. Complex I functions in the transfer of electrons from NADH to the respiratory chain. The immediate electron acceptor for the enzyme is believed to be ubiquinone (By similarity).</text>
</comment>
<comment type="catalytic activity">
    <reaction>
        <text>a ubiquinone + NADH + 5 H(+)(in) = a ubiquinol + NAD(+) + 4 H(+)(out)</text>
        <dbReference type="Rhea" id="RHEA:29091"/>
        <dbReference type="Rhea" id="RHEA-COMP:9565"/>
        <dbReference type="Rhea" id="RHEA-COMP:9566"/>
        <dbReference type="ChEBI" id="CHEBI:15378"/>
        <dbReference type="ChEBI" id="CHEBI:16389"/>
        <dbReference type="ChEBI" id="CHEBI:17976"/>
        <dbReference type="ChEBI" id="CHEBI:57540"/>
        <dbReference type="ChEBI" id="CHEBI:57945"/>
        <dbReference type="EC" id="7.1.1.2"/>
    </reaction>
</comment>
<comment type="subcellular location">
    <subcellularLocation>
        <location evidence="1">Mitochondrion membrane</location>
        <topology evidence="1">Multi-pass membrane protein</topology>
    </subcellularLocation>
</comment>
<comment type="similarity">
    <text evidence="3">Belongs to the complex I subunit 4L family.</text>
</comment>
<geneLocation type="mitochondrion"/>
<protein>
    <recommendedName>
        <fullName>NADH-ubiquinone oxidoreductase chain 4L</fullName>
        <ecNumber>7.1.1.2</ecNumber>
    </recommendedName>
    <alternativeName>
        <fullName>NADH dehydrogenase subunit 4L</fullName>
    </alternativeName>
</protein>
<evidence type="ECO:0000250" key="1"/>
<evidence type="ECO:0000255" key="2"/>
<evidence type="ECO:0000305" key="3"/>
<proteinExistence type="inferred from homology"/>
<keyword id="KW-0249">Electron transport</keyword>
<keyword id="KW-0472">Membrane</keyword>
<keyword id="KW-0496">Mitochondrion</keyword>
<keyword id="KW-0520">NAD</keyword>
<keyword id="KW-0679">Respiratory chain</keyword>
<keyword id="KW-1278">Translocase</keyword>
<keyword id="KW-0812">Transmembrane</keyword>
<keyword id="KW-1133">Transmembrane helix</keyword>
<keyword id="KW-0813">Transport</keyword>
<keyword id="KW-0830">Ubiquinone</keyword>
<feature type="chain" id="PRO_0000118411" description="NADH-ubiquinone oxidoreductase chain 4L">
    <location>
        <begin position="1"/>
        <end position="89"/>
    </location>
</feature>
<feature type="transmembrane region" description="Helical" evidence="2">
    <location>
        <begin position="1"/>
        <end position="21"/>
    </location>
</feature>
<feature type="transmembrane region" description="Helical" evidence="2">
    <location>
        <begin position="22"/>
        <end position="42"/>
    </location>
</feature>
<feature type="transmembrane region" description="Helical" evidence="2">
    <location>
        <begin position="57"/>
        <end position="77"/>
    </location>
</feature>
<organism>
    <name type="scientific">Cryphonectria parasitica</name>
    <name type="common">Chestnut blight fungus</name>
    <name type="synonym">Endothia parasitica</name>
    <dbReference type="NCBI Taxonomy" id="5116"/>
    <lineage>
        <taxon>Eukaryota</taxon>
        <taxon>Fungi</taxon>
        <taxon>Dikarya</taxon>
        <taxon>Ascomycota</taxon>
        <taxon>Pezizomycotina</taxon>
        <taxon>Sordariomycetes</taxon>
        <taxon>Sordariomycetidae</taxon>
        <taxon>Diaporthales</taxon>
        <taxon>Cryphonectriaceae</taxon>
        <taxon>Cryphonectria-Endothia species complex</taxon>
        <taxon>Cryphonectria</taxon>
    </lineage>
</organism>